<gene>
    <name evidence="1" type="primary">cyaY</name>
    <name type="ordered locus">EcE24377A_4322</name>
</gene>
<evidence type="ECO:0000255" key="1">
    <source>
        <dbReference type="HAMAP-Rule" id="MF_00142"/>
    </source>
</evidence>
<reference key="1">
    <citation type="journal article" date="2008" name="J. Bacteriol.">
        <title>The pangenome structure of Escherichia coli: comparative genomic analysis of E. coli commensal and pathogenic isolates.</title>
        <authorList>
            <person name="Rasko D.A."/>
            <person name="Rosovitz M.J."/>
            <person name="Myers G.S.A."/>
            <person name="Mongodin E.F."/>
            <person name="Fricke W.F."/>
            <person name="Gajer P."/>
            <person name="Crabtree J."/>
            <person name="Sebaihia M."/>
            <person name="Thomson N.R."/>
            <person name="Chaudhuri R."/>
            <person name="Henderson I.R."/>
            <person name="Sperandio V."/>
            <person name="Ravel J."/>
        </authorList>
    </citation>
    <scope>NUCLEOTIDE SEQUENCE [LARGE SCALE GENOMIC DNA]</scope>
    <source>
        <strain>E24377A / ETEC</strain>
    </source>
</reference>
<comment type="function">
    <text evidence="1">Involved in iron-sulfur (Fe-S) cluster assembly. May act as a regulator of Fe-S biogenesis.</text>
</comment>
<comment type="similarity">
    <text evidence="1">Belongs to the frataxin family.</text>
</comment>
<keyword id="KW-0408">Iron</keyword>
<keyword id="KW-0479">Metal-binding</keyword>
<keyword id="KW-1185">Reference proteome</keyword>
<dbReference type="EMBL" id="CP000800">
    <property type="protein sequence ID" value="ABV17629.1"/>
    <property type="molecule type" value="Genomic_DNA"/>
</dbReference>
<dbReference type="RefSeq" id="WP_000999947.1">
    <property type="nucleotide sequence ID" value="NC_009801.1"/>
</dbReference>
<dbReference type="BMRB" id="A7ZU09"/>
<dbReference type="SMR" id="A7ZU09"/>
<dbReference type="GeneID" id="93778137"/>
<dbReference type="KEGG" id="ecw:EcE24377A_4322"/>
<dbReference type="HOGENOM" id="CLU_080880_3_0_6"/>
<dbReference type="Proteomes" id="UP000001122">
    <property type="component" value="Chromosome"/>
</dbReference>
<dbReference type="GO" id="GO:0005829">
    <property type="term" value="C:cytosol"/>
    <property type="evidence" value="ECO:0007669"/>
    <property type="project" value="TreeGrafter"/>
</dbReference>
<dbReference type="GO" id="GO:0008199">
    <property type="term" value="F:ferric iron binding"/>
    <property type="evidence" value="ECO:0007669"/>
    <property type="project" value="InterPro"/>
</dbReference>
<dbReference type="GO" id="GO:0008198">
    <property type="term" value="F:ferrous iron binding"/>
    <property type="evidence" value="ECO:0007669"/>
    <property type="project" value="TreeGrafter"/>
</dbReference>
<dbReference type="GO" id="GO:0016226">
    <property type="term" value="P:iron-sulfur cluster assembly"/>
    <property type="evidence" value="ECO:0007669"/>
    <property type="project" value="UniProtKB-UniRule"/>
</dbReference>
<dbReference type="CDD" id="cd00503">
    <property type="entry name" value="Frataxin"/>
    <property type="match status" value="1"/>
</dbReference>
<dbReference type="FunFam" id="3.30.920.10:FF:000001">
    <property type="entry name" value="Iron-sulfur cluster assembly protein CyaY"/>
    <property type="match status" value="1"/>
</dbReference>
<dbReference type="Gene3D" id="3.30.920.10">
    <property type="entry name" value="Frataxin/CyaY"/>
    <property type="match status" value="1"/>
</dbReference>
<dbReference type="HAMAP" id="MF_00142">
    <property type="entry name" value="CyaY"/>
    <property type="match status" value="1"/>
</dbReference>
<dbReference type="InterPro" id="IPR047584">
    <property type="entry name" value="CyaY"/>
</dbReference>
<dbReference type="InterPro" id="IPR002908">
    <property type="entry name" value="Frataxin/CyaY"/>
</dbReference>
<dbReference type="InterPro" id="IPR036524">
    <property type="entry name" value="Frataxin/CyaY_sf"/>
</dbReference>
<dbReference type="InterPro" id="IPR020895">
    <property type="entry name" value="Frataxin_CS"/>
</dbReference>
<dbReference type="NCBIfam" id="TIGR03421">
    <property type="entry name" value="FeS_CyaY"/>
    <property type="match status" value="1"/>
</dbReference>
<dbReference type="PANTHER" id="PTHR16821">
    <property type="entry name" value="FRATAXIN"/>
    <property type="match status" value="1"/>
</dbReference>
<dbReference type="PANTHER" id="PTHR16821:SF2">
    <property type="entry name" value="FRATAXIN, MITOCHONDRIAL"/>
    <property type="match status" value="1"/>
</dbReference>
<dbReference type="Pfam" id="PF01491">
    <property type="entry name" value="Frataxin_Cyay"/>
    <property type="match status" value="1"/>
</dbReference>
<dbReference type="SMART" id="SM01219">
    <property type="entry name" value="Frataxin_Cyay"/>
    <property type="match status" value="1"/>
</dbReference>
<dbReference type="SUPFAM" id="SSF55387">
    <property type="entry name" value="Frataxin/Nqo15-like"/>
    <property type="match status" value="1"/>
</dbReference>
<dbReference type="PROSITE" id="PS01344">
    <property type="entry name" value="FRATAXIN_1"/>
    <property type="match status" value="1"/>
</dbReference>
<dbReference type="PROSITE" id="PS50810">
    <property type="entry name" value="FRATAXIN_2"/>
    <property type="match status" value="1"/>
</dbReference>
<feature type="chain" id="PRO_1000057930" description="Iron-sulfur cluster assembly protein CyaY">
    <location>
        <begin position="1"/>
        <end position="106"/>
    </location>
</feature>
<name>CYAY_ECO24</name>
<accession>A7ZU09</accession>
<organism>
    <name type="scientific">Escherichia coli O139:H28 (strain E24377A / ETEC)</name>
    <dbReference type="NCBI Taxonomy" id="331111"/>
    <lineage>
        <taxon>Bacteria</taxon>
        <taxon>Pseudomonadati</taxon>
        <taxon>Pseudomonadota</taxon>
        <taxon>Gammaproteobacteria</taxon>
        <taxon>Enterobacterales</taxon>
        <taxon>Enterobacteriaceae</taxon>
        <taxon>Escherichia</taxon>
    </lineage>
</organism>
<sequence>MNDSEFHRLADQLWLTIEERLDDWDGDSDIDCEINGGVLTITFENGSKIIINRQEPLHQVWLATKQGGYHFDLKGDEWICDRSGETFWDLLEQAATQQAGETVSFR</sequence>
<proteinExistence type="inferred from homology"/>
<protein>
    <recommendedName>
        <fullName evidence="1">Iron-sulfur cluster assembly protein CyaY</fullName>
    </recommendedName>
</protein>